<dbReference type="EC" id="2.6.1.37" evidence="1"/>
<dbReference type="EMBL" id="CT573326">
    <property type="protein sequence ID" value="CAK16288.1"/>
    <property type="molecule type" value="Genomic_DNA"/>
</dbReference>
<dbReference type="RefSeq" id="WP_011534672.1">
    <property type="nucleotide sequence ID" value="NC_008027.1"/>
</dbReference>
<dbReference type="SMR" id="Q1I7U0"/>
<dbReference type="STRING" id="384676.PSEEN3553"/>
<dbReference type="GeneID" id="32806624"/>
<dbReference type="KEGG" id="pen:PSEEN3553"/>
<dbReference type="eggNOG" id="COG0075">
    <property type="taxonomic scope" value="Bacteria"/>
</dbReference>
<dbReference type="HOGENOM" id="CLU_027686_3_1_6"/>
<dbReference type="OrthoDB" id="9766472at2"/>
<dbReference type="Proteomes" id="UP000000658">
    <property type="component" value="Chromosome"/>
</dbReference>
<dbReference type="GO" id="GO:0047304">
    <property type="term" value="F:2-aminoethylphosphonate-pyruvate transaminase activity"/>
    <property type="evidence" value="ECO:0007669"/>
    <property type="project" value="UniProtKB-UniRule"/>
</dbReference>
<dbReference type="GO" id="GO:0019700">
    <property type="term" value="P:organic phosphonate catabolic process"/>
    <property type="evidence" value="ECO:0007669"/>
    <property type="project" value="InterPro"/>
</dbReference>
<dbReference type="Gene3D" id="3.90.1150.10">
    <property type="entry name" value="Aspartate Aminotransferase, domain 1"/>
    <property type="match status" value="1"/>
</dbReference>
<dbReference type="Gene3D" id="3.40.640.10">
    <property type="entry name" value="Type I PLP-dependent aspartate aminotransferase-like (Major domain)"/>
    <property type="match status" value="1"/>
</dbReference>
<dbReference type="HAMAP" id="MF_01376">
    <property type="entry name" value="PhnW_aminotrans_5"/>
    <property type="match status" value="1"/>
</dbReference>
<dbReference type="InterPro" id="IPR000192">
    <property type="entry name" value="Aminotrans_V_dom"/>
</dbReference>
<dbReference type="InterPro" id="IPR012703">
    <property type="entry name" value="NH2EtPonate_pyrv_transaminase"/>
</dbReference>
<dbReference type="InterPro" id="IPR015424">
    <property type="entry name" value="PyrdxlP-dep_Trfase"/>
</dbReference>
<dbReference type="InterPro" id="IPR015421">
    <property type="entry name" value="PyrdxlP-dep_Trfase_major"/>
</dbReference>
<dbReference type="InterPro" id="IPR015422">
    <property type="entry name" value="PyrdxlP-dep_Trfase_small"/>
</dbReference>
<dbReference type="InterPro" id="IPR024169">
    <property type="entry name" value="SP_NH2Trfase/AEP_transaminase"/>
</dbReference>
<dbReference type="NCBIfam" id="TIGR03301">
    <property type="entry name" value="PhnW-AepZ"/>
    <property type="match status" value="1"/>
</dbReference>
<dbReference type="NCBIfam" id="NF010006">
    <property type="entry name" value="PRK13479.1"/>
    <property type="match status" value="1"/>
</dbReference>
<dbReference type="NCBIfam" id="TIGR02326">
    <property type="entry name" value="transamin_PhnW"/>
    <property type="match status" value="1"/>
</dbReference>
<dbReference type="PANTHER" id="PTHR42778">
    <property type="entry name" value="2-AMINOETHYLPHOSPHONATE--PYRUVATE TRANSAMINASE"/>
    <property type="match status" value="1"/>
</dbReference>
<dbReference type="PANTHER" id="PTHR42778:SF1">
    <property type="entry name" value="2-AMINOETHYLPHOSPHONATE--PYRUVATE TRANSAMINASE"/>
    <property type="match status" value="1"/>
</dbReference>
<dbReference type="Pfam" id="PF00266">
    <property type="entry name" value="Aminotran_5"/>
    <property type="match status" value="1"/>
</dbReference>
<dbReference type="PIRSF" id="PIRSF000524">
    <property type="entry name" value="SPT"/>
    <property type="match status" value="1"/>
</dbReference>
<dbReference type="SUPFAM" id="SSF53383">
    <property type="entry name" value="PLP-dependent transferases"/>
    <property type="match status" value="1"/>
</dbReference>
<keyword id="KW-0032">Aminotransferase</keyword>
<keyword id="KW-0663">Pyridoxal phosphate</keyword>
<keyword id="KW-0670">Pyruvate</keyword>
<keyword id="KW-0808">Transferase</keyword>
<name>PHNW_PSEE4</name>
<comment type="function">
    <text evidence="1">Involved in phosphonate degradation.</text>
</comment>
<comment type="catalytic activity">
    <reaction evidence="1">
        <text>(2-aminoethyl)phosphonate + pyruvate = phosphonoacetaldehyde + L-alanine</text>
        <dbReference type="Rhea" id="RHEA:17021"/>
        <dbReference type="ChEBI" id="CHEBI:15361"/>
        <dbReference type="ChEBI" id="CHEBI:57418"/>
        <dbReference type="ChEBI" id="CHEBI:57972"/>
        <dbReference type="ChEBI" id="CHEBI:58383"/>
        <dbReference type="EC" id="2.6.1.37"/>
    </reaction>
</comment>
<comment type="cofactor">
    <cofactor evidence="1">
        <name>pyridoxal 5'-phosphate</name>
        <dbReference type="ChEBI" id="CHEBI:597326"/>
    </cofactor>
</comment>
<comment type="subunit">
    <text evidence="1">Homodimer.</text>
</comment>
<comment type="similarity">
    <text evidence="1">Belongs to the class-V pyridoxal-phosphate-dependent aminotransferase family. PhnW subfamily.</text>
</comment>
<protein>
    <recommendedName>
        <fullName evidence="1">2-aminoethylphosphonate--pyruvate transaminase</fullName>
        <ecNumber evidence="1">2.6.1.37</ecNumber>
    </recommendedName>
    <alternativeName>
        <fullName evidence="1">2-aminoethylphosphonate aminotransferase</fullName>
    </alternativeName>
    <alternativeName>
        <fullName evidence="1">AEP transaminase</fullName>
        <shortName evidence="1">AEPT</shortName>
    </alternativeName>
</protein>
<accession>Q1I7U0</accession>
<organism>
    <name type="scientific">Pseudomonas entomophila (strain L48)</name>
    <dbReference type="NCBI Taxonomy" id="384676"/>
    <lineage>
        <taxon>Bacteria</taxon>
        <taxon>Pseudomonadati</taxon>
        <taxon>Pseudomonadota</taxon>
        <taxon>Gammaproteobacteria</taxon>
        <taxon>Pseudomonadales</taxon>
        <taxon>Pseudomonadaceae</taxon>
        <taxon>Pseudomonas</taxon>
    </lineage>
</organism>
<evidence type="ECO:0000255" key="1">
    <source>
        <dbReference type="HAMAP-Rule" id="MF_01376"/>
    </source>
</evidence>
<reference key="1">
    <citation type="journal article" date="2006" name="Nat. Biotechnol.">
        <title>Complete genome sequence of the entomopathogenic and metabolically versatile soil bacterium Pseudomonas entomophila.</title>
        <authorList>
            <person name="Vodovar N."/>
            <person name="Vallenet D."/>
            <person name="Cruveiller S."/>
            <person name="Rouy Z."/>
            <person name="Barbe V."/>
            <person name="Acosta C."/>
            <person name="Cattolico L."/>
            <person name="Jubin C."/>
            <person name="Lajus A."/>
            <person name="Segurens B."/>
            <person name="Vacherie B."/>
            <person name="Wincker P."/>
            <person name="Weissenbach J."/>
            <person name="Lemaitre B."/>
            <person name="Medigue C."/>
            <person name="Boccard F."/>
        </authorList>
    </citation>
    <scope>NUCLEOTIDE SEQUENCE [LARGE SCALE GENOMIC DNA]</scope>
    <source>
        <strain>L48</strain>
    </source>
</reference>
<sequence>MSNAPILLTPGPLTTSTRTRQAMLVDWGSWDRDFNQLTASVCEQLLAIIDGSASHHCVPLQGSGTFAVEAAIGTLVPRDGKVLVLINGAYGQRLAKICKVLGRTFSTFETAEDQPTTAEDVDRLLAADPAVTHVALIHCETSTGILNPLPEIAQVIQRHGKRLIIDAMSSFGALPIDAREVPFEALIAASGKCLEGVPGMGFVFAEKTALAAAEGNAHSLAMDLQDQHAYMAKTGQWRFTPPTHVVAALHEALLQYNEEGGLPARHQRYQDNCQTLLDGMAKIGLHSFLPAEIQAPIIVTFHAPKDPRYQFKDFYERVKAKGFILYPGKLTQVETFRVGCIGVVGAAGMQAAVDAVAEVLREMEVLDI</sequence>
<gene>
    <name evidence="1" type="primary">phnW</name>
    <name type="ordered locus">PSEEN3553</name>
</gene>
<proteinExistence type="inferred from homology"/>
<feature type="chain" id="PRO_0000286775" description="2-aminoethylphosphonate--pyruvate transaminase">
    <location>
        <begin position="1"/>
        <end position="368"/>
    </location>
</feature>
<feature type="modified residue" description="N6-(pyridoxal phosphate)lysine" evidence="1">
    <location>
        <position position="192"/>
    </location>
</feature>